<protein>
    <recommendedName>
        <fullName evidence="1">RNase adapter protein RapZ</fullName>
    </recommendedName>
</protein>
<organism>
    <name type="scientific">Shigella flexneri serotype 5b (strain 8401)</name>
    <dbReference type="NCBI Taxonomy" id="373384"/>
    <lineage>
        <taxon>Bacteria</taxon>
        <taxon>Pseudomonadati</taxon>
        <taxon>Pseudomonadota</taxon>
        <taxon>Gammaproteobacteria</taxon>
        <taxon>Enterobacterales</taxon>
        <taxon>Enterobacteriaceae</taxon>
        <taxon>Shigella</taxon>
    </lineage>
</organism>
<reference key="1">
    <citation type="journal article" date="2006" name="BMC Genomics">
        <title>Complete genome sequence of Shigella flexneri 5b and comparison with Shigella flexneri 2a.</title>
        <authorList>
            <person name="Nie H."/>
            <person name="Yang F."/>
            <person name="Zhang X."/>
            <person name="Yang J."/>
            <person name="Chen L."/>
            <person name="Wang J."/>
            <person name="Xiong Z."/>
            <person name="Peng J."/>
            <person name="Sun L."/>
            <person name="Dong J."/>
            <person name="Xue Y."/>
            <person name="Xu X."/>
            <person name="Chen S."/>
            <person name="Yao Z."/>
            <person name="Shen Y."/>
            <person name="Jin Q."/>
        </authorList>
    </citation>
    <scope>NUCLEOTIDE SEQUENCE [LARGE SCALE GENOMIC DNA]</scope>
    <source>
        <strain>8401</strain>
    </source>
</reference>
<sequence length="284" mass="32492">MVLMIVSGRSGSGKSVALRALEDMGFYCVDNLPVVLLPDLARTLADREISAAVSIDVRNMPESPEIFEQAMSNLPDAFSPQLLFLDADRNTLIRRYSDTRRLHPLSSKNLSLESAIDKESDLLEPLRSRADLIVDTSEMSVHELAEMLRTRLLGKRERELTMVFESFGFKHGIPIDADYVFDVRFLPNPHWDPKLRPMTGLDKPVAAFLDRHTEVHNFIYQTRSYLELWLPMLETNNRSYLTVAIGCTGGKHRSVYIAEQLADYFRSRGKNVQSRHRTLEKRKP</sequence>
<dbReference type="EMBL" id="CP000266">
    <property type="protein sequence ID" value="ABF05286.1"/>
    <property type="molecule type" value="Genomic_DNA"/>
</dbReference>
<dbReference type="RefSeq" id="WP_000243741.1">
    <property type="nucleotide sequence ID" value="NC_008258.1"/>
</dbReference>
<dbReference type="SMR" id="Q0T079"/>
<dbReference type="GeneID" id="93778776"/>
<dbReference type="KEGG" id="sfv:SFV_3235"/>
<dbReference type="HOGENOM" id="CLU_059558_1_1_6"/>
<dbReference type="Proteomes" id="UP000000659">
    <property type="component" value="Chromosome"/>
</dbReference>
<dbReference type="GO" id="GO:0005524">
    <property type="term" value="F:ATP binding"/>
    <property type="evidence" value="ECO:0007669"/>
    <property type="project" value="UniProtKB-UniRule"/>
</dbReference>
<dbReference type="GO" id="GO:0005525">
    <property type="term" value="F:GTP binding"/>
    <property type="evidence" value="ECO:0007669"/>
    <property type="project" value="UniProtKB-UniRule"/>
</dbReference>
<dbReference type="GO" id="GO:0003723">
    <property type="term" value="F:RNA binding"/>
    <property type="evidence" value="ECO:0007669"/>
    <property type="project" value="UniProtKB-KW"/>
</dbReference>
<dbReference type="Gene3D" id="3.40.50.300">
    <property type="entry name" value="P-loop containing nucleotide triphosphate hydrolases"/>
    <property type="match status" value="1"/>
</dbReference>
<dbReference type="HAMAP" id="MF_00636">
    <property type="entry name" value="RapZ_like"/>
    <property type="match status" value="1"/>
</dbReference>
<dbReference type="InterPro" id="IPR027417">
    <property type="entry name" value="P-loop_NTPase"/>
</dbReference>
<dbReference type="InterPro" id="IPR005337">
    <property type="entry name" value="RapZ-like"/>
</dbReference>
<dbReference type="InterPro" id="IPR053930">
    <property type="entry name" value="RapZ-like_N"/>
</dbReference>
<dbReference type="InterPro" id="IPR053931">
    <property type="entry name" value="RapZ_C"/>
</dbReference>
<dbReference type="NCBIfam" id="NF003828">
    <property type="entry name" value="PRK05416.1"/>
    <property type="match status" value="1"/>
</dbReference>
<dbReference type="PANTHER" id="PTHR30448">
    <property type="entry name" value="RNASE ADAPTER PROTEIN RAPZ"/>
    <property type="match status" value="1"/>
</dbReference>
<dbReference type="PANTHER" id="PTHR30448:SF0">
    <property type="entry name" value="RNASE ADAPTER PROTEIN RAPZ"/>
    <property type="match status" value="1"/>
</dbReference>
<dbReference type="Pfam" id="PF22740">
    <property type="entry name" value="PapZ_C"/>
    <property type="match status" value="1"/>
</dbReference>
<dbReference type="Pfam" id="PF03668">
    <property type="entry name" value="RapZ-like_N"/>
    <property type="match status" value="1"/>
</dbReference>
<dbReference type="PIRSF" id="PIRSF005052">
    <property type="entry name" value="P-loopkin"/>
    <property type="match status" value="1"/>
</dbReference>
<dbReference type="SUPFAM" id="SSF52540">
    <property type="entry name" value="P-loop containing nucleoside triphosphate hydrolases"/>
    <property type="match status" value="1"/>
</dbReference>
<gene>
    <name evidence="1" type="primary">rapZ</name>
    <name type="ordered locus">SFV_3235</name>
</gene>
<comment type="function">
    <text evidence="1">Modulates the synthesis of GlmS, by affecting the processing and stability of the regulatory small RNA GlmZ. When glucosamine-6-phosphate (GlcN6P) concentrations are high in the cell, RapZ binds GlmZ and targets it to cleavage by RNase E. Consequently, GlmZ is inactivated and unable to activate GlmS synthesis. Under low GlcN6P concentrations, RapZ is sequestered and inactivated by an other regulatory small RNA, GlmY, preventing GlmZ degradation and leading to synthesis of GlmS.</text>
</comment>
<comment type="subunit">
    <text evidence="1">Homotrimer.</text>
</comment>
<comment type="similarity">
    <text evidence="1">Belongs to the RapZ-like family. RapZ subfamily.</text>
</comment>
<proteinExistence type="inferred from homology"/>
<accession>Q0T079</accession>
<keyword id="KW-0067">ATP-binding</keyword>
<keyword id="KW-0342">GTP-binding</keyword>
<keyword id="KW-0547">Nucleotide-binding</keyword>
<keyword id="KW-0694">RNA-binding</keyword>
<feature type="chain" id="PRO_1000056862" description="RNase adapter protein RapZ">
    <location>
        <begin position="1"/>
        <end position="284"/>
    </location>
</feature>
<feature type="region of interest" description="RNA-binding" evidence="1">
    <location>
        <begin position="266"/>
        <end position="284"/>
    </location>
</feature>
<feature type="binding site" evidence="1">
    <location>
        <begin position="8"/>
        <end position="15"/>
    </location>
    <ligand>
        <name>ATP</name>
        <dbReference type="ChEBI" id="CHEBI:30616"/>
    </ligand>
</feature>
<feature type="binding site" evidence="1">
    <location>
        <begin position="56"/>
        <end position="59"/>
    </location>
    <ligand>
        <name>GTP</name>
        <dbReference type="ChEBI" id="CHEBI:37565"/>
    </ligand>
</feature>
<name>RAPZ_SHIF8</name>
<evidence type="ECO:0000255" key="1">
    <source>
        <dbReference type="HAMAP-Rule" id="MF_00636"/>
    </source>
</evidence>